<accession>O43916</accession>
<accession>D3DQP2</accession>
<reference key="1">
    <citation type="journal article" date="1997" name="J. Biol. Chem.">
        <title>Molecular cloning and characterization of human keratan sulfate Gal-6-sulfotransferase.</title>
        <authorList>
            <person name="Fukuta M."/>
            <person name="Inazawa J."/>
            <person name="Torii T."/>
            <person name="Tsuzuki K."/>
            <person name="Shimada E."/>
            <person name="Habuchi O."/>
        </authorList>
    </citation>
    <scope>NUCLEOTIDE SEQUENCE [MRNA]</scope>
    <scope>FUNCTION</scope>
    <scope>CATALYTIC ACTIVITY</scope>
    <scope>TISSUE SPECIFICITY</scope>
    <source>
        <tissue>Fetal brain</tissue>
    </source>
</reference>
<reference key="2">
    <citation type="journal article" date="1998" name="Biochim. Biophys. Acta">
        <title>Human chondroitin 6-sulfotransferase: cloning, gene structure, and chromosomal localization.</title>
        <authorList>
            <person name="Mazany K.D."/>
            <person name="Peng T."/>
            <person name="Watson C.E."/>
            <person name="Tabas I."/>
            <person name="Williams K.J."/>
        </authorList>
    </citation>
    <scope>NUCLEOTIDE SEQUENCE [MRNA]</scope>
</reference>
<reference key="3">
    <citation type="journal article" date="1999" name="Genomics">
        <title>CHST1 and CHST2 sulfotransferases expressed by human vascular endothelial cells: cDNA cloning, expression, and chromosomal localization.</title>
        <authorList>
            <person name="Li X."/>
            <person name="Tedder T.F."/>
        </authorList>
    </citation>
    <scope>NUCLEOTIDE SEQUENCE [MRNA]</scope>
    <source>
        <tissue>Umbilical vein endothelial cell</tissue>
    </source>
</reference>
<reference key="4">
    <citation type="submission" date="2003-07" db="EMBL/GenBank/DDBJ databases">
        <authorList>
            <consortium name="NIEHS SNPs program"/>
        </authorList>
    </citation>
    <scope>NUCLEOTIDE SEQUENCE [GENOMIC DNA]</scope>
</reference>
<reference key="5">
    <citation type="submission" date="2005-09" db="EMBL/GenBank/DDBJ databases">
        <authorList>
            <person name="Mural R.J."/>
            <person name="Istrail S."/>
            <person name="Sutton G.G."/>
            <person name="Florea L."/>
            <person name="Halpern A.L."/>
            <person name="Mobarry C.M."/>
            <person name="Lippert R."/>
            <person name="Walenz B."/>
            <person name="Shatkay H."/>
            <person name="Dew I."/>
            <person name="Miller J.R."/>
            <person name="Flanigan M.J."/>
            <person name="Edwards N.J."/>
            <person name="Bolanos R."/>
            <person name="Fasulo D."/>
            <person name="Halldorsson B.V."/>
            <person name="Hannenhalli S."/>
            <person name="Turner R."/>
            <person name="Yooseph S."/>
            <person name="Lu F."/>
            <person name="Nusskern D.R."/>
            <person name="Shue B.C."/>
            <person name="Zheng X.H."/>
            <person name="Zhong F."/>
            <person name="Delcher A.L."/>
            <person name="Huson D.H."/>
            <person name="Kravitz S.A."/>
            <person name="Mouchard L."/>
            <person name="Reinert K."/>
            <person name="Remington K.A."/>
            <person name="Clark A.G."/>
            <person name="Waterman M.S."/>
            <person name="Eichler E.E."/>
            <person name="Adams M.D."/>
            <person name="Hunkapiller M.W."/>
            <person name="Myers E.W."/>
            <person name="Venter J.C."/>
        </authorList>
    </citation>
    <scope>NUCLEOTIDE SEQUENCE [LARGE SCALE GENOMIC DNA]</scope>
</reference>
<reference key="6">
    <citation type="journal article" date="2004" name="Genome Res.">
        <title>The status, quality, and expansion of the NIH full-length cDNA project: the Mammalian Gene Collection (MGC).</title>
        <authorList>
            <consortium name="The MGC Project Team"/>
        </authorList>
    </citation>
    <scope>NUCLEOTIDE SEQUENCE [LARGE SCALE MRNA]</scope>
    <source>
        <tissue>Brain</tissue>
    </source>
</reference>
<reference key="7">
    <citation type="journal article" date="2000" name="Glycobiology">
        <title>Sulfation of sialyl N-acetyllactosamine oligosaccharides and fetuin oligosaccharides by keratan sulfate Gal-6-sulfotransferase.</title>
        <authorList>
            <person name="Torii T."/>
            <person name="Fukuta M."/>
            <person name="Habuchi O."/>
        </authorList>
    </citation>
    <scope>FUNCTION</scope>
    <scope>SUBSTRATE SPECIFICITY</scope>
    <scope>BIOPHYSICOCHEMICAL PROPERTIES</scope>
</reference>
<reference key="8">
    <citation type="journal article" date="1999" name="J. Cell Biol.">
        <title>Sulfotransferases of two specificities function in the reconstitution of high endothelial cell ligands for L-selectin.</title>
        <authorList>
            <person name="Bistrup A."/>
            <person name="Bhakta S."/>
            <person name="Lee J.K."/>
            <person name="Belov Y.Y."/>
            <person name="Gunn M.D."/>
            <person name="Zuo F.-R."/>
            <person name="Huang C.-C."/>
            <person name="Kannagi R."/>
            <person name="Rosen S.D."/>
            <person name="Hemmerich S."/>
        </authorList>
    </citation>
    <scope>FUNCTION</scope>
</reference>
<reference key="9">
    <citation type="journal article" date="2001" name="J. Leukoc. Biol.">
        <title>CHST1 and CHST2 sulfotransferase expression by vascular endothelial cells regulates shear-resistant leukocyte rolling via L-selectin.</title>
        <authorList>
            <person name="Li X."/>
            <person name="Tu L."/>
            <person name="Murphy P.G."/>
            <person name="Kadono T."/>
            <person name="Steeber D.A."/>
            <person name="Tedder T.F."/>
        </authorList>
    </citation>
    <scope>TISSUE SPECIFICITY</scope>
</reference>
<reference key="10">
    <citation type="journal article" date="2007" name="J. Biol. Chem.">
        <title>Enzymes responsible for synthesis of corneal keratan sulfate glycosaminoglycans.</title>
        <authorList>
            <person name="Kitayama K."/>
            <person name="Hayashida Y."/>
            <person name="Nishida K."/>
            <person name="Akama T.O."/>
        </authorList>
    </citation>
    <scope>FUNCTION</scope>
    <scope>CATALYTIC ACTIVITY</scope>
    <scope>PATHWAY</scope>
</reference>
<sequence>MQCSWKAVLLLALASIAIQYTAIRTFTAKSFHTCPGLAEAGLAERLCEESPTFAYNLSRKTHILILATTRSGSSFVGQLFNQHLDVFYLFEPLYHVQNTLIPRFTQGKSPADRRVMLGASRDLLRSLYDCDLYFLENYIKPPPVNHTTDRIFRRGASRVLCSRPVCDPPGPADLVLEEGDCVRKCGLLNLTVAAEACRERSHVAIKTVRVPEVNDLRALVEDPRLNLKVIQLVRDPRGILASRSETFRDTYRLWRLWYGTGRKPYNLDVTQLTTVCEDFSNSVSTGLMRPPWLKGKYMLVRYEDLARNPMKKTEEIYGFLGIPLDSHVARWIQNNTRGDPTLGKHKYGTVRNSAATAEKWRFRLSYDIVAFAQNACQQVLAQLGYKIAASEEELKNPSVSLVEERDFRPFS</sequence>
<feature type="chain" id="PRO_0000085182" description="Carbohydrate sulfotransferase 1">
    <location>
        <begin position="1"/>
        <end position="411"/>
    </location>
</feature>
<feature type="topological domain" description="Cytoplasmic" evidence="3">
    <location>
        <begin position="1"/>
        <end position="2"/>
    </location>
</feature>
<feature type="transmembrane region" description="Helical; Signal-anchor for type II membrane protein" evidence="3">
    <location>
        <begin position="3"/>
        <end position="23"/>
    </location>
</feature>
<feature type="topological domain" description="Lumenal" evidence="3">
    <location>
        <begin position="24"/>
        <end position="411"/>
    </location>
</feature>
<feature type="short sequence motif" description="Cell attachment site" evidence="3">
    <location>
        <begin position="337"/>
        <end position="339"/>
    </location>
</feature>
<feature type="binding site" evidence="1">
    <location>
        <begin position="69"/>
        <end position="75"/>
    </location>
    <ligand>
        <name>3'-phosphoadenylyl sulfate</name>
        <dbReference type="ChEBI" id="CHEBI:58339"/>
    </ligand>
</feature>
<feature type="binding site" evidence="1">
    <location>
        <begin position="234"/>
        <end position="242"/>
    </location>
    <ligand>
        <name>3'-phosphoadenylyl sulfate</name>
        <dbReference type="ChEBI" id="CHEBI:58339"/>
    </ligand>
</feature>
<feature type="glycosylation site" description="N-linked (GlcNAc...) asparagine" evidence="3">
    <location>
        <position position="56"/>
    </location>
</feature>
<feature type="glycosylation site" description="N-linked (GlcNAc...) asparagine" evidence="3">
    <location>
        <position position="145"/>
    </location>
</feature>
<feature type="glycosylation site" description="N-linked (GlcNAc...) asparagine" evidence="3">
    <location>
        <position position="189"/>
    </location>
</feature>
<feature type="glycosylation site" description="N-linked (GlcNAc...) asparagine" evidence="3">
    <location>
        <position position="334"/>
    </location>
</feature>
<organism>
    <name type="scientific">Homo sapiens</name>
    <name type="common">Human</name>
    <dbReference type="NCBI Taxonomy" id="9606"/>
    <lineage>
        <taxon>Eukaryota</taxon>
        <taxon>Metazoa</taxon>
        <taxon>Chordata</taxon>
        <taxon>Craniata</taxon>
        <taxon>Vertebrata</taxon>
        <taxon>Euteleostomi</taxon>
        <taxon>Mammalia</taxon>
        <taxon>Eutheria</taxon>
        <taxon>Euarchontoglires</taxon>
        <taxon>Primates</taxon>
        <taxon>Haplorrhini</taxon>
        <taxon>Catarrhini</taxon>
        <taxon>Hominidae</taxon>
        <taxon>Homo</taxon>
    </lineage>
</organism>
<name>CHST1_HUMAN</name>
<evidence type="ECO:0000250" key="1"/>
<evidence type="ECO:0000250" key="2">
    <source>
        <dbReference type="UniProtKB" id="Q9EQC0"/>
    </source>
</evidence>
<evidence type="ECO:0000255" key="3"/>
<evidence type="ECO:0000269" key="4">
    <source>
    </source>
</evidence>
<evidence type="ECO:0000269" key="5">
    <source>
    </source>
</evidence>
<evidence type="ECO:0000269" key="6">
    <source>
    </source>
</evidence>
<evidence type="ECO:0000269" key="7">
    <source>
    </source>
</evidence>
<evidence type="ECO:0000269" key="8">
    <source>
    </source>
</evidence>
<evidence type="ECO:0000305" key="9"/>
<evidence type="ECO:0000305" key="10">
    <source>
    </source>
</evidence>
<evidence type="ECO:0000312" key="11">
    <source>
        <dbReference type="HGNC" id="HGNC:1969"/>
    </source>
</evidence>
<proteinExistence type="evidence at protein level"/>
<protein>
    <recommendedName>
        <fullName>Carbohydrate sulfotransferase 1</fullName>
    </recommendedName>
    <alternativeName>
        <fullName>Galactose/N-acetylglucosamine/N-acetylglucosamine 6-O-sulfotransferase 1</fullName>
        <shortName>GST-1</shortName>
    </alternativeName>
    <alternativeName>
        <fullName>Keratan sulfate Gal-6 sulfotransferase</fullName>
        <shortName>KS6ST</shortName>
        <shortName>KSGal6ST</shortName>
        <shortName>KSST</shortName>
        <ecNumber evidence="7 8">2.8.2.21</ecNumber>
    </alternativeName>
</protein>
<dbReference type="EC" id="2.8.2.21" evidence="7 8"/>
<dbReference type="EMBL" id="AB003791">
    <property type="protein sequence ID" value="BAA24840.1"/>
    <property type="molecule type" value="mRNA"/>
</dbReference>
<dbReference type="EMBL" id="U65637">
    <property type="protein sequence ID" value="AAC28776.1"/>
    <property type="molecule type" value="mRNA"/>
</dbReference>
<dbReference type="EMBL" id="AF090137">
    <property type="protein sequence ID" value="AAD19878.1"/>
    <property type="molecule type" value="mRNA"/>
</dbReference>
<dbReference type="EMBL" id="AY339617">
    <property type="protein sequence ID" value="AAP88041.1"/>
    <property type="molecule type" value="Genomic_DNA"/>
</dbReference>
<dbReference type="EMBL" id="CH471064">
    <property type="protein sequence ID" value="EAW68035.1"/>
    <property type="molecule type" value="Genomic_DNA"/>
</dbReference>
<dbReference type="EMBL" id="CH471064">
    <property type="protein sequence ID" value="EAW68038.1"/>
    <property type="molecule type" value="Genomic_DNA"/>
</dbReference>
<dbReference type="EMBL" id="BC022567">
    <property type="protein sequence ID" value="AAH22567.1"/>
    <property type="molecule type" value="mRNA"/>
</dbReference>
<dbReference type="EMBL" id="BC028235">
    <property type="protein sequence ID" value="AAH28235.1"/>
    <property type="molecule type" value="mRNA"/>
</dbReference>
<dbReference type="CCDS" id="CCDS7913.1"/>
<dbReference type="RefSeq" id="NP_003645.1">
    <property type="nucleotide sequence ID" value="NM_003654.6"/>
</dbReference>
<dbReference type="RefSeq" id="XP_047283737.1">
    <property type="nucleotide sequence ID" value="XM_047427781.1"/>
</dbReference>
<dbReference type="RefSeq" id="XP_054226287.1">
    <property type="nucleotide sequence ID" value="XM_054370312.1"/>
</dbReference>
<dbReference type="BioGRID" id="114104">
    <property type="interactions" value="5"/>
</dbReference>
<dbReference type="FunCoup" id="O43916">
    <property type="interactions" value="756"/>
</dbReference>
<dbReference type="IntAct" id="O43916">
    <property type="interactions" value="4"/>
</dbReference>
<dbReference type="STRING" id="9606.ENSP00000309270"/>
<dbReference type="GlyCosmos" id="O43916">
    <property type="glycosylation" value="4 sites, No reported glycans"/>
</dbReference>
<dbReference type="GlyGen" id="O43916">
    <property type="glycosylation" value="5 sites, 1 N-linked glycan (1 site)"/>
</dbReference>
<dbReference type="iPTMnet" id="O43916"/>
<dbReference type="PhosphoSitePlus" id="O43916"/>
<dbReference type="BioMuta" id="CHST1"/>
<dbReference type="jPOST" id="O43916"/>
<dbReference type="MassIVE" id="O43916"/>
<dbReference type="PaxDb" id="9606-ENSP00000309270"/>
<dbReference type="PeptideAtlas" id="O43916"/>
<dbReference type="ProteomicsDB" id="49232"/>
<dbReference type="Antibodypedia" id="13251">
    <property type="antibodies" value="185 antibodies from 29 providers"/>
</dbReference>
<dbReference type="DNASU" id="8534"/>
<dbReference type="Ensembl" id="ENST00000308064.7">
    <property type="protein sequence ID" value="ENSP00000309270.2"/>
    <property type="gene ID" value="ENSG00000175264.8"/>
</dbReference>
<dbReference type="GeneID" id="8534"/>
<dbReference type="KEGG" id="hsa:8534"/>
<dbReference type="MANE-Select" id="ENST00000308064.7">
    <property type="protein sequence ID" value="ENSP00000309270.2"/>
    <property type="RefSeq nucleotide sequence ID" value="NM_003654.6"/>
    <property type="RefSeq protein sequence ID" value="NP_003645.1"/>
</dbReference>
<dbReference type="UCSC" id="uc001mys.3">
    <property type="organism name" value="human"/>
</dbReference>
<dbReference type="AGR" id="HGNC:1969"/>
<dbReference type="CTD" id="8534"/>
<dbReference type="DisGeNET" id="8534"/>
<dbReference type="GeneCards" id="CHST1"/>
<dbReference type="HGNC" id="HGNC:1969">
    <property type="gene designation" value="CHST1"/>
</dbReference>
<dbReference type="HPA" id="ENSG00000175264">
    <property type="expression patterns" value="Tissue enhanced (brain)"/>
</dbReference>
<dbReference type="MIM" id="603797">
    <property type="type" value="gene"/>
</dbReference>
<dbReference type="neXtProt" id="NX_O43916"/>
<dbReference type="OpenTargets" id="ENSG00000175264"/>
<dbReference type="PharmGKB" id="PA26501"/>
<dbReference type="VEuPathDB" id="HostDB:ENSG00000175264"/>
<dbReference type="eggNOG" id="ENOG502S17I">
    <property type="taxonomic scope" value="Eukaryota"/>
</dbReference>
<dbReference type="GeneTree" id="ENSGT00940000161262"/>
<dbReference type="HOGENOM" id="CLU_028381_3_2_1"/>
<dbReference type="InParanoid" id="O43916"/>
<dbReference type="OMA" id="NVKHWIR"/>
<dbReference type="OrthoDB" id="6138663at2759"/>
<dbReference type="PAN-GO" id="O43916">
    <property type="GO annotations" value="5 GO annotations based on evolutionary models"/>
</dbReference>
<dbReference type="PhylomeDB" id="O43916"/>
<dbReference type="TreeFam" id="TF342871"/>
<dbReference type="BioCyc" id="MetaCyc:HS10902-MONOMER"/>
<dbReference type="BRENDA" id="2.8.2.21">
    <property type="organism ID" value="2681"/>
</dbReference>
<dbReference type="PathwayCommons" id="O43916"/>
<dbReference type="Reactome" id="R-HSA-2022854">
    <property type="pathway name" value="Keratan sulfate biosynthesis"/>
</dbReference>
<dbReference type="SABIO-RK" id="O43916"/>
<dbReference type="SignaLink" id="O43916"/>
<dbReference type="BioGRID-ORCS" id="8534">
    <property type="hits" value="11 hits in 1146 CRISPR screens"/>
</dbReference>
<dbReference type="GeneWiki" id="CHST1"/>
<dbReference type="GenomeRNAi" id="8534"/>
<dbReference type="Pharos" id="O43916">
    <property type="development level" value="Tbio"/>
</dbReference>
<dbReference type="PRO" id="PR:O43916"/>
<dbReference type="Proteomes" id="UP000005640">
    <property type="component" value="Chromosome 11"/>
</dbReference>
<dbReference type="RNAct" id="O43916">
    <property type="molecule type" value="protein"/>
</dbReference>
<dbReference type="Bgee" id="ENSG00000175264">
    <property type="expression patterns" value="Expressed in frontal pole and 144 other cell types or tissues"/>
</dbReference>
<dbReference type="GO" id="GO:0000139">
    <property type="term" value="C:Golgi membrane"/>
    <property type="evidence" value="ECO:0000304"/>
    <property type="project" value="Reactome"/>
</dbReference>
<dbReference type="GO" id="GO:0016020">
    <property type="term" value="C:membrane"/>
    <property type="evidence" value="ECO:0000304"/>
    <property type="project" value="ProtInc"/>
</dbReference>
<dbReference type="GO" id="GO:0045130">
    <property type="term" value="F:keratan sulfotransferase activity"/>
    <property type="evidence" value="ECO:0000314"/>
    <property type="project" value="UniProtKB"/>
</dbReference>
<dbReference type="GO" id="GO:0001517">
    <property type="term" value="F:N-acetylglucosamine 6-O-sulfotransferase activity"/>
    <property type="evidence" value="ECO:0000318"/>
    <property type="project" value="GO_Central"/>
</dbReference>
<dbReference type="GO" id="GO:0008146">
    <property type="term" value="F:sulfotransferase activity"/>
    <property type="evidence" value="ECO:0000314"/>
    <property type="project" value="UniProtKB"/>
</dbReference>
<dbReference type="GO" id="GO:0006012">
    <property type="term" value="P:galactose metabolic process"/>
    <property type="evidence" value="ECO:0000314"/>
    <property type="project" value="UniProtKB"/>
</dbReference>
<dbReference type="GO" id="GO:0006954">
    <property type="term" value="P:inflammatory response"/>
    <property type="evidence" value="ECO:0007669"/>
    <property type="project" value="UniProtKB-KW"/>
</dbReference>
<dbReference type="GO" id="GO:0018146">
    <property type="term" value="P:keratan sulfate proteoglycan biosynthetic process"/>
    <property type="evidence" value="ECO:0000314"/>
    <property type="project" value="UniProtKB"/>
</dbReference>
<dbReference type="GO" id="GO:0042339">
    <property type="term" value="P:keratan sulfate proteoglycan metabolic process"/>
    <property type="evidence" value="ECO:0000314"/>
    <property type="project" value="UniProtKB"/>
</dbReference>
<dbReference type="GO" id="GO:0006044">
    <property type="term" value="P:N-acetylglucosamine metabolic process"/>
    <property type="evidence" value="ECO:0000318"/>
    <property type="project" value="GO_Central"/>
</dbReference>
<dbReference type="GO" id="GO:0005976">
    <property type="term" value="P:polysaccharide metabolic process"/>
    <property type="evidence" value="ECO:0000304"/>
    <property type="project" value="ProtInc"/>
</dbReference>
<dbReference type="GO" id="GO:0006790">
    <property type="term" value="P:sulfur compound metabolic process"/>
    <property type="evidence" value="ECO:0000314"/>
    <property type="project" value="UniProtKB"/>
</dbReference>
<dbReference type="Gene3D" id="3.40.50.300">
    <property type="entry name" value="P-loop containing nucleotide triphosphate hydrolases"/>
    <property type="match status" value="1"/>
</dbReference>
<dbReference type="InterPro" id="IPR016469">
    <property type="entry name" value="Carbohydrate_sulfotransferase"/>
</dbReference>
<dbReference type="InterPro" id="IPR051135">
    <property type="entry name" value="Gal/GlcNAc/GalNAc_ST"/>
</dbReference>
<dbReference type="InterPro" id="IPR027417">
    <property type="entry name" value="P-loop_NTPase"/>
</dbReference>
<dbReference type="InterPro" id="IPR000863">
    <property type="entry name" value="Sulfotransferase_dom"/>
</dbReference>
<dbReference type="PANTHER" id="PTHR10704">
    <property type="entry name" value="CARBOHYDRATE SULFOTRANSFERASE"/>
    <property type="match status" value="1"/>
</dbReference>
<dbReference type="PANTHER" id="PTHR10704:SF36">
    <property type="entry name" value="CARBOHYDRATE SULFOTRANSFERASE 1"/>
    <property type="match status" value="1"/>
</dbReference>
<dbReference type="Pfam" id="PF00685">
    <property type="entry name" value="Sulfotransfer_1"/>
    <property type="match status" value="1"/>
</dbReference>
<dbReference type="PIRSF" id="PIRSF005883">
    <property type="entry name" value="Carbohydrate_sulfotransferase"/>
    <property type="match status" value="1"/>
</dbReference>
<dbReference type="SUPFAM" id="SSF52540">
    <property type="entry name" value="P-loop containing nucleoside triphosphate hydrolases"/>
    <property type="match status" value="1"/>
</dbReference>
<gene>
    <name evidence="11" type="primary">CHST1</name>
</gene>
<keyword id="KW-0119">Carbohydrate metabolism</keyword>
<keyword id="KW-0325">Glycoprotein</keyword>
<keyword id="KW-0333">Golgi apparatus</keyword>
<keyword id="KW-0395">Inflammatory response</keyword>
<keyword id="KW-0472">Membrane</keyword>
<keyword id="KW-1267">Proteomics identification</keyword>
<keyword id="KW-1185">Reference proteome</keyword>
<keyword id="KW-0735">Signal-anchor</keyword>
<keyword id="KW-0808">Transferase</keyword>
<keyword id="KW-0812">Transmembrane</keyword>
<keyword id="KW-1133">Transmembrane helix</keyword>
<comment type="function">
    <text evidence="2 4 5 7 8">Sulfotransferase that utilizes 3'-phospho-5'-adenylyl sulfate (PAPS) as sulfonate donor to catalyze the transfer of sulfate to position 6 of internal galactose (Gal) residues of keratan. Cooperates with B4GALT4 and B3GNT7 glycosyltransferases and CHST6 sulfotransferase to construct and elongate disulfated disaccharide unit [-&gt;3(6-sulfoGalbeta)1-&gt;4(6-sulfoGlcNAcbeta)1-&gt;] within keratan sulfate polymer (PubMed:10642612, PubMed:17690104, PubMed:9405439). Has a preference for sulfating keratan sulfate, but it also transfers sulfate to the unsulfated polymer (PubMed:9405439). Involved in biosynthesis of phosphacan, a major keratan sulfate proteoglycan in the developing brain (By similarity). Involved in biosynthesis of 6-sulfoGalbeta-containing O-linked glycans in high endothelial venules of lymph nodes. May act in a synergistic manner with CHST4 to generate sialyl 6',6-disulfo Lewis X motif, a recognition determinant for immune cell receptors implicated in leukocyte trafficking (PubMed:10330415). Catalyzes sulfation of N-acetyllactosamine (LacNAc) oligosaccharides with highest efficiency for sialylated LacNAc structures (PubMed:10642612).</text>
</comment>
<comment type="catalytic activity">
    <reaction evidence="7 8">
        <text>3'-phosphoadenylyl sulfate + keratan = adenosine 3',5'-bisphosphate + keratan 6'-sulfate.</text>
        <dbReference type="EC" id="2.8.2.21"/>
    </reaction>
</comment>
<comment type="biophysicochemical properties">
    <kinetics>
        <KM evidence="5">10.4 mM for Galbeta1-&gt;4(6-sulfo)GlcNAcbeta1-&gt;3(6-sulfo)Galbeta1-&gt;4(6-sulfo)GlcNAc (L2L4)</KM>
        <KM evidence="5">0.65 mM for NeuAcalpha2-&gt;3Galbeta1-&gt;4(6-sulfo)GlcNAcbeta1-&gt;3(6-sulfo)Galbeta1-&gt;4(6-sulfo)GlcNAc (SL2L4)</KM>
        <KM evidence="5">0.38 mM for keratan sulfate</KM>
        <Vmax evidence="5">85.0 pmol/min/mg enzyme toward Galbeta1-&gt;4(6-sulfo)GlcNAcbeta1-&gt;3(6-sulfo)Galbeta1-&gt;4(6-sulfo)GlcNAc (L2L4)</Vmax>
        <Vmax evidence="5">20.0 pmol/min/mg enzyme toward NeuAcalpha2-&gt;3Galbeta1-&gt;4(6-sulfo)GlcNAcbeta1-&gt;3(6-sulfo)Galbeta1-&gt;4(6-sulfo)GlcNAc (SL2L4)</Vmax>
        <Vmax evidence="5">6.1 pmol/min/mg enzyme toward keratan sulfate</Vmax>
    </kinetics>
</comment>
<comment type="pathway">
    <text evidence="7">Glycan metabolism.</text>
</comment>
<comment type="interaction">
    <interactant intactId="EBI-748017">
        <id>O43916</id>
    </interactant>
    <interactant intactId="EBI-11721746">
        <id>Q8TED1</id>
        <label>GPX8</label>
    </interactant>
    <organismsDiffer>false</organismsDiffer>
    <experiments>3</experiments>
</comment>
<comment type="interaction">
    <interactant intactId="EBI-748017">
        <id>O43916</id>
    </interactant>
    <interactant intactId="EBI-1211440">
        <id>P27105</id>
        <label>STOM</label>
    </interactant>
    <organismsDiffer>false</organismsDiffer>
    <experiments>3</experiments>
</comment>
<comment type="subcellular location">
    <subcellularLocation>
        <location evidence="1">Golgi apparatus membrane</location>
        <topology evidence="1">Single-pass type II membrane protein</topology>
    </subcellularLocation>
</comment>
<comment type="tissue specificity">
    <text evidence="6 8">Widely expressed at low level. Expressed in brain and skeletal muscle. Expressed by high endothelial cells (HEVs) and leukocytes.</text>
</comment>
<comment type="similarity">
    <text evidence="9">Belongs to the sulfotransferase 1 family. Gal/GlcNAc/GalNAc subfamily.</text>
</comment>
<comment type="caution">
    <text evidence="10">Was originally (PubMed:9639683) thought to be the ortholog of chicken CHST3 and therefore named C6ST. However, it has no strong chondroitin 6-sulfotransferase activity.</text>
</comment>